<feature type="signal peptide" evidence="6">
    <location>
        <begin position="1"/>
        <end position="30"/>
    </location>
</feature>
<feature type="chain" id="PRO_0000014699" description="Contactin-2">
    <location>
        <begin position="31"/>
        <end position="1015"/>
    </location>
</feature>
<feature type="propeptide" id="PRO_0000014700" description="Removed in mature form" evidence="2">
    <location>
        <begin position="1016"/>
        <end position="1040"/>
    </location>
</feature>
<feature type="domain" description="Ig-like C2-type 1">
    <location>
        <begin position="39"/>
        <end position="130"/>
    </location>
</feature>
<feature type="domain" description="Ig-like C2-type 2">
    <location>
        <begin position="135"/>
        <end position="224"/>
    </location>
</feature>
<feature type="domain" description="Ig-like C2-type 3">
    <location>
        <begin position="241"/>
        <end position="324"/>
    </location>
</feature>
<feature type="domain" description="Ig-like C2-type 4">
    <location>
        <begin position="329"/>
        <end position="413"/>
    </location>
</feature>
<feature type="domain" description="Ig-like C2-type 5">
    <location>
        <begin position="419"/>
        <end position="506"/>
    </location>
</feature>
<feature type="domain" description="Ig-like C2-type 6">
    <location>
        <begin position="511"/>
        <end position="605"/>
    </location>
</feature>
<feature type="domain" description="Fibronectin type-III 1" evidence="4">
    <location>
        <begin position="612"/>
        <end position="710"/>
    </location>
</feature>
<feature type="domain" description="Fibronectin type-III 2" evidence="4">
    <location>
        <begin position="715"/>
        <end position="812"/>
    </location>
</feature>
<feature type="domain" description="Fibronectin type-III 3" evidence="4">
    <location>
        <begin position="817"/>
        <end position="913"/>
    </location>
</feature>
<feature type="domain" description="Fibronectin type-III 4" evidence="4">
    <location>
        <begin position="917"/>
        <end position="1008"/>
    </location>
</feature>
<feature type="region of interest" description="Disordered" evidence="5">
    <location>
        <begin position="895"/>
        <end position="921"/>
    </location>
</feature>
<feature type="short sequence motif" description="Cell attachment site" evidence="2">
    <location>
        <begin position="796"/>
        <end position="798"/>
    </location>
</feature>
<feature type="lipid moiety-binding region" description="GPI-anchor amidated alanine" evidence="2">
    <location>
        <position position="1015"/>
    </location>
</feature>
<feature type="glycosylation site" description="N-linked (GlcNAc...) asparagine" evidence="8">
    <location>
        <position position="78"/>
    </location>
</feature>
<feature type="glycosylation site" description="N-linked (GlcNAc...) asparagine" evidence="2">
    <location>
        <position position="200"/>
    </location>
</feature>
<feature type="glycosylation site" description="N-linked (GlcNAc...) asparagine" evidence="2">
    <location>
        <position position="206"/>
    </location>
</feature>
<feature type="glycosylation site" description="N-linked (GlcNAc...) asparagine" evidence="8">
    <location>
        <position position="463"/>
    </location>
</feature>
<feature type="glycosylation site" description="N-linked (GlcNAc...) asparagine" evidence="2">
    <location>
        <position position="479"/>
    </location>
</feature>
<feature type="glycosylation site" description="N-linked (GlcNAc...) asparagine" evidence="8">
    <location>
        <position position="500"/>
    </location>
</feature>
<feature type="glycosylation site" description="N-linked (GlcNAc...) asparagine" evidence="2">
    <location>
        <position position="527"/>
    </location>
</feature>
<feature type="glycosylation site" description="N-linked (GlcNAc...) asparagine" evidence="2">
    <location>
        <position position="777"/>
    </location>
</feature>
<feature type="glycosylation site" description="N-linked (GlcNAc...) asparagine" evidence="2">
    <location>
        <position position="832"/>
    </location>
</feature>
<feature type="glycosylation site" description="N-linked (GlcNAc...) asparagine" evidence="2">
    <location>
        <position position="920"/>
    </location>
</feature>
<feature type="glycosylation site" description="N-linked (GlcNAc...) asparagine" evidence="2">
    <location>
        <position position="942"/>
    </location>
</feature>
<feature type="disulfide bond" evidence="3">
    <location>
        <begin position="63"/>
        <end position="113"/>
    </location>
</feature>
<feature type="disulfide bond" evidence="3">
    <location>
        <begin position="157"/>
        <end position="209"/>
    </location>
</feature>
<feature type="disulfide bond" evidence="3">
    <location>
        <begin position="263"/>
        <end position="308"/>
    </location>
</feature>
<feature type="disulfide bond" evidence="3">
    <location>
        <begin position="350"/>
        <end position="397"/>
    </location>
</feature>
<name>CNTN2_RAT</name>
<reference key="1">
    <citation type="journal article" date="1990" name="Cell">
        <title>The axonal glycoprotein TAG-1 is an immunoglobulin superfamily member with neurite outgrowth-promoting activity.</title>
        <authorList>
            <person name="Furley A.J."/>
            <person name="Morton S.B."/>
            <person name="Manalo D."/>
            <person name="Karagogeos D."/>
            <person name="Dodd J."/>
            <person name="Jessell T.M."/>
        </authorList>
    </citation>
    <scope>NUCLEOTIDE SEQUENCE [MRNA]</scope>
    <scope>PROTEIN SEQUENCE OF 31-41</scope>
    <source>
        <tissue>Spinal cord</tissue>
    </source>
</reference>
<reference key="2">
    <citation type="journal article" date="2013" name="J. Proteome Res.">
        <title>Site-specific glycan-peptide analysis for determination of N-glycoproteome heterogeneity.</title>
        <authorList>
            <person name="Parker B.L."/>
            <person name="Thaysen-Andersen M."/>
            <person name="Solis N."/>
            <person name="Scott N.E."/>
            <person name="Larsen M.R."/>
            <person name="Graham M.E."/>
            <person name="Packer N.H."/>
            <person name="Cordwell S.J."/>
        </authorList>
    </citation>
    <scope>GLYCOSYLATION [LARGE SCALE ANALYSIS] AT ASN-78; ASN-463 AND ASN-500</scope>
    <scope>IDENTIFICATION BY MASS SPECTROMETRY [LARGE SCALE ANALYSIS]</scope>
    <source>
        <tissue>Brain</tissue>
    </source>
</reference>
<accession>P22063</accession>
<proteinExistence type="evidence at protein level"/>
<organism>
    <name type="scientific">Rattus norvegicus</name>
    <name type="common">Rat</name>
    <dbReference type="NCBI Taxonomy" id="10116"/>
    <lineage>
        <taxon>Eukaryota</taxon>
        <taxon>Metazoa</taxon>
        <taxon>Chordata</taxon>
        <taxon>Craniata</taxon>
        <taxon>Vertebrata</taxon>
        <taxon>Euteleostomi</taxon>
        <taxon>Mammalia</taxon>
        <taxon>Eutheria</taxon>
        <taxon>Euarchontoglires</taxon>
        <taxon>Glires</taxon>
        <taxon>Rodentia</taxon>
        <taxon>Myomorpha</taxon>
        <taxon>Muroidea</taxon>
        <taxon>Muridae</taxon>
        <taxon>Murinae</taxon>
        <taxon>Rattus</taxon>
    </lineage>
</organism>
<gene>
    <name type="primary">Cntn2</name>
    <name type="synonym">Tax1</name>
</gene>
<comment type="function">
    <text evidence="1">May play a role in the initial growth and guidance of axons. May be involved in cell adhesion. In conjunction with another transmembrane protein, CNTNAP2, contributes to the organization of axonal domains at nodes of Ranvier by maintaining voltage-gated potassium channels at the juxtaparanodal region (By similarity).</text>
</comment>
<comment type="subcellular location">
    <subcellularLocation>
        <location>Cell membrane</location>
        <topology>Lipid-anchor</topology>
        <topology>GPI-anchor</topology>
    </subcellularLocation>
    <text>Attached to the neuronal membrane by a GPI-anchor and is also released from neurons.</text>
</comment>
<comment type="tissue specificity">
    <text>In neural tissues in embryos, and in adult brain, spinal cord and cerebellum.</text>
</comment>
<comment type="developmental stage">
    <text>Transiently expressed on a subset of axons in the developing rat nervous system.</text>
</comment>
<comment type="similarity">
    <text evidence="7">Belongs to the immunoglobulin superfamily. Contactin family.</text>
</comment>
<keyword id="KW-0130">Cell adhesion</keyword>
<keyword id="KW-1003">Cell membrane</keyword>
<keyword id="KW-0903">Direct protein sequencing</keyword>
<keyword id="KW-1015">Disulfide bond</keyword>
<keyword id="KW-0325">Glycoprotein</keyword>
<keyword id="KW-0336">GPI-anchor</keyword>
<keyword id="KW-0393">Immunoglobulin domain</keyword>
<keyword id="KW-0449">Lipoprotein</keyword>
<keyword id="KW-0472">Membrane</keyword>
<keyword id="KW-1185">Reference proteome</keyword>
<keyword id="KW-0677">Repeat</keyword>
<keyword id="KW-0732">Signal</keyword>
<sequence length="1040" mass="113043">MGTHARKKASLLLLVLATVALVSSPGWSFAQGTPATFGPIFEEQPIGLLFPEESAEDQVTLACRARASPPATYRWKMNGTDMNLEPGSRHQLMGGNLVIMSPTKTQDAGVYQCLASNPVGTVVSKEAVLRFGFLQEFSKEERDPVKTHEGWGVMLPCNPPAHYPGLSYRWLLNEFPNFIPTDGRHFVSQTTGNLYIARTNASDLGNYSCLATSHMDFSTKSVFSKFAQLNLAAEDPRLFAPSIKARFPPETYALVGQQVTLECFAFGNPVPRIKWRKVDGSLSPQWATAEPTLQIPSVSFEDEGTYECEAENSKGRDTVQGRIIVQAQPEWLKVISDTEADIGSNLRWGCAAAGKPRPMVRWLRNGEPLASQNRVEVLAGDLRFSKLSLEDSGMYQCVAENKHGTIYASAELAVQALAPDFRQNPVRRLIPAARGGEISILCQPRAAPKATILWSKGTEILGNSTRVTVTSDGTLIIRNISRSDEGKYTCFAENFMGKANSTGILSVRDATKITLAPSSADINVGDNLTLQCHASHDPTMDLTFTWTLDDFPIDFDKPGGHYRRASAKETIGDLTILNAHVRHGGKYTCMAQTVVDGTSKEATVLVRGPPGPPGGVVVRDIGDTTVQLSWSRGFDNHSPIAKYTLQARTPPSGKWKQVRTNPVNIEGNAETAQVLGLMPWMDYEFRVSASNILGTGEPSGPSSKIRTKEAVPSVAPSGLSGGGGAPGELIINWTPVSREYQNGDGFGYLLSFRRQGSSSWQTARVPGADAQYFVYGNDSIQPYTPFEVKIRSYNRRGDGPESLTALVYSAEEEPRVAPAKVWAKGSSSSEMNVSWEPVLQDMNGILLGYEIRYWKAGDNEAAADRVRTAGLDTSARVTGLNPNTKYHVTVRAYNRAGTGPASPSADAMTVKPPPRRPPGNISWTFSSSSLSLKWDPVVPLRNESTVTGYKMLYQNDLHPTPTLHLTSKNWIEIPVPEDIGHALVQIRTTGPGGDGIPAEVHIVRNGGTSMMVESAAARPAHPGPAFSCMVILMLAGYQKL</sequence>
<protein>
    <recommendedName>
        <fullName>Contactin-2</fullName>
    </recommendedName>
    <alternativeName>
        <fullName>Axonal glycoprotein TAG-1</fullName>
    </alternativeName>
    <alternativeName>
        <fullName>Axonin-1</fullName>
    </alternativeName>
    <alternativeName>
        <fullName>Transient axonal glycoprotein 1</fullName>
        <shortName>TAX-1</shortName>
    </alternativeName>
</protein>
<evidence type="ECO:0000250" key="1"/>
<evidence type="ECO:0000255" key="2"/>
<evidence type="ECO:0000255" key="3">
    <source>
        <dbReference type="PROSITE-ProRule" id="PRU00114"/>
    </source>
</evidence>
<evidence type="ECO:0000255" key="4">
    <source>
        <dbReference type="PROSITE-ProRule" id="PRU00316"/>
    </source>
</evidence>
<evidence type="ECO:0000256" key="5">
    <source>
        <dbReference type="SAM" id="MobiDB-lite"/>
    </source>
</evidence>
<evidence type="ECO:0000269" key="6">
    <source>
    </source>
</evidence>
<evidence type="ECO:0000305" key="7"/>
<evidence type="ECO:0007744" key="8">
    <source>
    </source>
</evidence>
<dbReference type="EMBL" id="M31725">
    <property type="protein sequence ID" value="AAA42201.1"/>
    <property type="molecule type" value="mRNA"/>
</dbReference>
<dbReference type="PIR" id="A34695">
    <property type="entry name" value="A34695"/>
</dbReference>
<dbReference type="RefSeq" id="NP_037016.1">
    <property type="nucleotide sequence ID" value="NM_012884.1"/>
</dbReference>
<dbReference type="SMR" id="P22063"/>
<dbReference type="FunCoup" id="P22063">
    <property type="interactions" value="1655"/>
</dbReference>
<dbReference type="STRING" id="10116.ENSRNOP00000012190"/>
<dbReference type="GlyCosmos" id="P22063">
    <property type="glycosylation" value="11 sites, 5 glycans"/>
</dbReference>
<dbReference type="GlyGen" id="P22063">
    <property type="glycosylation" value="11 sites, 5 N-linked glycans (3 sites)"/>
</dbReference>
<dbReference type="iPTMnet" id="P22063"/>
<dbReference type="PhosphoSitePlus" id="P22063"/>
<dbReference type="PaxDb" id="10116-ENSRNOP00000012190"/>
<dbReference type="GeneID" id="25356"/>
<dbReference type="KEGG" id="rno:25356"/>
<dbReference type="UCSC" id="RGD:3821">
    <property type="organism name" value="rat"/>
</dbReference>
<dbReference type="AGR" id="RGD:3821"/>
<dbReference type="CTD" id="6900"/>
<dbReference type="RGD" id="3821">
    <property type="gene designation" value="Cntn2"/>
</dbReference>
<dbReference type="eggNOG" id="KOG3513">
    <property type="taxonomic scope" value="Eukaryota"/>
</dbReference>
<dbReference type="InParanoid" id="P22063"/>
<dbReference type="OrthoDB" id="6418794at2759"/>
<dbReference type="PhylomeDB" id="P22063"/>
<dbReference type="PRO" id="PR:P22063"/>
<dbReference type="Proteomes" id="UP000002494">
    <property type="component" value="Unplaced"/>
</dbReference>
<dbReference type="GO" id="GO:0030424">
    <property type="term" value="C:axon"/>
    <property type="evidence" value="ECO:0000266"/>
    <property type="project" value="RGD"/>
</dbReference>
<dbReference type="GO" id="GO:0043194">
    <property type="term" value="C:axon initial segment"/>
    <property type="evidence" value="ECO:0000266"/>
    <property type="project" value="RGD"/>
</dbReference>
<dbReference type="GO" id="GO:0009986">
    <property type="term" value="C:cell surface"/>
    <property type="evidence" value="ECO:0000266"/>
    <property type="project" value="RGD"/>
</dbReference>
<dbReference type="GO" id="GO:0044224">
    <property type="term" value="C:juxtaparanode region of axon"/>
    <property type="evidence" value="ECO:0000266"/>
    <property type="project" value="RGD"/>
</dbReference>
<dbReference type="GO" id="GO:0043209">
    <property type="term" value="C:myelin sheath"/>
    <property type="evidence" value="ECO:0000266"/>
    <property type="project" value="RGD"/>
</dbReference>
<dbReference type="GO" id="GO:0043005">
    <property type="term" value="C:neuron projection"/>
    <property type="evidence" value="ECO:0000266"/>
    <property type="project" value="RGD"/>
</dbReference>
<dbReference type="GO" id="GO:0043025">
    <property type="term" value="C:neuronal cell body"/>
    <property type="evidence" value="ECO:0000266"/>
    <property type="project" value="RGD"/>
</dbReference>
<dbReference type="GO" id="GO:0033268">
    <property type="term" value="C:node of Ranvier"/>
    <property type="evidence" value="ECO:0000266"/>
    <property type="project" value="RGD"/>
</dbReference>
<dbReference type="GO" id="GO:0005886">
    <property type="term" value="C:plasma membrane"/>
    <property type="evidence" value="ECO:0000314"/>
    <property type="project" value="BHF-UCL"/>
</dbReference>
<dbReference type="GO" id="GO:0045211">
    <property type="term" value="C:postsynaptic membrane"/>
    <property type="evidence" value="ECO:0000266"/>
    <property type="project" value="RGD"/>
</dbReference>
<dbReference type="GO" id="GO:0098552">
    <property type="term" value="C:side of membrane"/>
    <property type="evidence" value="ECO:0007669"/>
    <property type="project" value="UniProtKB-KW"/>
</dbReference>
<dbReference type="GO" id="GO:0045202">
    <property type="term" value="C:synapse"/>
    <property type="evidence" value="ECO:0000314"/>
    <property type="project" value="BHF-UCL"/>
</dbReference>
<dbReference type="GO" id="GO:0030246">
    <property type="term" value="F:carbohydrate binding"/>
    <property type="evidence" value="ECO:0000266"/>
    <property type="project" value="RGD"/>
</dbReference>
<dbReference type="GO" id="GO:0098631">
    <property type="term" value="F:cell adhesion mediator activity"/>
    <property type="evidence" value="ECO:0000266"/>
    <property type="project" value="RGD"/>
</dbReference>
<dbReference type="GO" id="GO:0098632">
    <property type="term" value="F:cell-cell adhesion mediator activity"/>
    <property type="evidence" value="ECO:0000318"/>
    <property type="project" value="GO_Central"/>
</dbReference>
<dbReference type="GO" id="GO:0007628">
    <property type="term" value="P:adult walking behavior"/>
    <property type="evidence" value="ECO:0000266"/>
    <property type="project" value="RGD"/>
</dbReference>
<dbReference type="GO" id="GO:0007411">
    <property type="term" value="P:axon guidance"/>
    <property type="evidence" value="ECO:0000266"/>
    <property type="project" value="RGD"/>
</dbReference>
<dbReference type="GO" id="GO:0007413">
    <property type="term" value="P:axonal fasciculation"/>
    <property type="evidence" value="ECO:0000266"/>
    <property type="project" value="RGD"/>
</dbReference>
<dbReference type="GO" id="GO:0007409">
    <property type="term" value="P:axonogenesis"/>
    <property type="evidence" value="ECO:0000314"/>
    <property type="project" value="RGD"/>
</dbReference>
<dbReference type="GO" id="GO:0098609">
    <property type="term" value="P:cell-cell adhesion"/>
    <property type="evidence" value="ECO:0000318"/>
    <property type="project" value="GO_Central"/>
</dbReference>
<dbReference type="GO" id="GO:0007160">
    <property type="term" value="P:cell-matrix adhesion"/>
    <property type="evidence" value="ECO:0000314"/>
    <property type="project" value="RGD"/>
</dbReference>
<dbReference type="GO" id="GO:0022010">
    <property type="term" value="P:central nervous system myelination"/>
    <property type="evidence" value="ECO:0000266"/>
    <property type="project" value="RGD"/>
</dbReference>
<dbReference type="GO" id="GO:0021853">
    <property type="term" value="P:cerebral cortex GABAergic interneuron migration"/>
    <property type="evidence" value="ECO:0000266"/>
    <property type="project" value="RGD"/>
</dbReference>
<dbReference type="GO" id="GO:0045163">
    <property type="term" value="P:clustering of voltage-gated potassium channels"/>
    <property type="evidence" value="ECO:0000266"/>
    <property type="project" value="RGD"/>
</dbReference>
<dbReference type="GO" id="GO:0051649">
    <property type="term" value="P:establishment of localization in cell"/>
    <property type="evidence" value="ECO:0000266"/>
    <property type="project" value="RGD"/>
</dbReference>
<dbReference type="GO" id="GO:0071206">
    <property type="term" value="P:establishment of protein localization to juxtaparanode region of axon"/>
    <property type="evidence" value="ECO:0000266"/>
    <property type="project" value="RGD"/>
</dbReference>
<dbReference type="GO" id="GO:0045444">
    <property type="term" value="P:fat cell differentiation"/>
    <property type="evidence" value="ECO:0000266"/>
    <property type="project" value="RGD"/>
</dbReference>
<dbReference type="GO" id="GO:0001973">
    <property type="term" value="P:G protein-coupled adenosine receptor signaling pathway"/>
    <property type="evidence" value="ECO:0000266"/>
    <property type="project" value="RGD"/>
</dbReference>
<dbReference type="GO" id="GO:0007612">
    <property type="term" value="P:learning"/>
    <property type="evidence" value="ECO:0000266"/>
    <property type="project" value="RGD"/>
</dbReference>
<dbReference type="GO" id="GO:0000226">
    <property type="term" value="P:microtubule cytoskeleton organization"/>
    <property type="evidence" value="ECO:0000266"/>
    <property type="project" value="RGD"/>
</dbReference>
<dbReference type="GO" id="GO:0045665">
    <property type="term" value="P:negative regulation of neuron differentiation"/>
    <property type="evidence" value="ECO:0000266"/>
    <property type="project" value="RGD"/>
</dbReference>
<dbReference type="GO" id="GO:0030182">
    <property type="term" value="P:neuron differentiation"/>
    <property type="evidence" value="ECO:0000266"/>
    <property type="project" value="RGD"/>
</dbReference>
<dbReference type="GO" id="GO:0001764">
    <property type="term" value="P:neuron migration"/>
    <property type="evidence" value="ECO:0000266"/>
    <property type="project" value="RGD"/>
</dbReference>
<dbReference type="GO" id="GO:0031175">
    <property type="term" value="P:neuron projection development"/>
    <property type="evidence" value="ECO:0000266"/>
    <property type="project" value="RGD"/>
</dbReference>
<dbReference type="GO" id="GO:0060168">
    <property type="term" value="P:positive regulation of adenosine receptor signaling pathway"/>
    <property type="evidence" value="ECO:0000266"/>
    <property type="project" value="RGD"/>
</dbReference>
<dbReference type="GO" id="GO:0010954">
    <property type="term" value="P:positive regulation of protein processing"/>
    <property type="evidence" value="ECO:0000266"/>
    <property type="project" value="RGD"/>
</dbReference>
<dbReference type="GO" id="GO:0097090">
    <property type="term" value="P:presynaptic membrane organization"/>
    <property type="evidence" value="ECO:0000250"/>
    <property type="project" value="UniProtKB"/>
</dbReference>
<dbReference type="GO" id="GO:0071205">
    <property type="term" value="P:protein localization to juxtaparanode region of axon"/>
    <property type="evidence" value="ECO:0000266"/>
    <property type="project" value="RGD"/>
</dbReference>
<dbReference type="GO" id="GO:0016485">
    <property type="term" value="P:protein processing"/>
    <property type="evidence" value="ECO:0000266"/>
    <property type="project" value="RGD"/>
</dbReference>
<dbReference type="GO" id="GO:0031623">
    <property type="term" value="P:receptor internalization"/>
    <property type="evidence" value="ECO:0000266"/>
    <property type="project" value="RGD"/>
</dbReference>
<dbReference type="GO" id="GO:0002023">
    <property type="term" value="P:reduction of food intake in response to dietary excess"/>
    <property type="evidence" value="ECO:0000266"/>
    <property type="project" value="RGD"/>
</dbReference>
<dbReference type="GO" id="GO:0048710">
    <property type="term" value="P:regulation of astrocyte differentiation"/>
    <property type="evidence" value="ECO:0000266"/>
    <property type="project" value="RGD"/>
</dbReference>
<dbReference type="GO" id="GO:0031133">
    <property type="term" value="P:regulation of axon diameter"/>
    <property type="evidence" value="ECO:0000266"/>
    <property type="project" value="RGD"/>
</dbReference>
<dbReference type="GO" id="GO:0022604">
    <property type="term" value="P:regulation of cell morphogenesis"/>
    <property type="evidence" value="ECO:0000266"/>
    <property type="project" value="RGD"/>
</dbReference>
<dbReference type="GO" id="GO:0048168">
    <property type="term" value="P:regulation of neuronal synaptic plasticity"/>
    <property type="evidence" value="ECO:0000266"/>
    <property type="project" value="RGD"/>
</dbReference>
<dbReference type="GO" id="GO:0002021">
    <property type="term" value="P:response to dietary excess"/>
    <property type="evidence" value="ECO:0000266"/>
    <property type="project" value="RGD"/>
</dbReference>
<dbReference type="CDD" id="cd00063">
    <property type="entry name" value="FN3"/>
    <property type="match status" value="3"/>
</dbReference>
<dbReference type="CDD" id="cd05727">
    <property type="entry name" value="Ig2_Contactin-2-like"/>
    <property type="match status" value="1"/>
</dbReference>
<dbReference type="CDD" id="cd05728">
    <property type="entry name" value="Ig4_Contactin-2-like"/>
    <property type="match status" value="1"/>
</dbReference>
<dbReference type="CDD" id="cd04969">
    <property type="entry name" value="Ig5_Contactin"/>
    <property type="match status" value="1"/>
</dbReference>
<dbReference type="FunFam" id="2.60.40.10:FF:000035">
    <property type="entry name" value="Contactin 1"/>
    <property type="match status" value="1"/>
</dbReference>
<dbReference type="FunFam" id="2.60.40.10:FF:000044">
    <property type="entry name" value="Contactin 1"/>
    <property type="match status" value="1"/>
</dbReference>
<dbReference type="FunFam" id="2.60.40.10:FF:000047">
    <property type="entry name" value="Contactin 1"/>
    <property type="match status" value="1"/>
</dbReference>
<dbReference type="FunFam" id="2.60.40.10:FF:000052">
    <property type="entry name" value="Contactin 1"/>
    <property type="match status" value="1"/>
</dbReference>
<dbReference type="FunFam" id="2.60.40.10:FF:000054">
    <property type="entry name" value="Contactin 1"/>
    <property type="match status" value="1"/>
</dbReference>
<dbReference type="FunFam" id="2.60.40.10:FF:000064">
    <property type="entry name" value="Contactin 1"/>
    <property type="match status" value="1"/>
</dbReference>
<dbReference type="FunFam" id="2.60.40.10:FF:000600">
    <property type="entry name" value="Contactin 2"/>
    <property type="match status" value="1"/>
</dbReference>
<dbReference type="FunFam" id="2.60.40.10:FF:000004">
    <property type="entry name" value="DCC isoform 1"/>
    <property type="match status" value="1"/>
</dbReference>
<dbReference type="FunFam" id="2.60.40.10:FF:000005">
    <property type="entry name" value="Neuronal cell adhesion molecule"/>
    <property type="match status" value="1"/>
</dbReference>
<dbReference type="FunFam" id="2.60.40.10:FF:000028">
    <property type="entry name" value="Neuronal cell adhesion molecule"/>
    <property type="match status" value="1"/>
</dbReference>
<dbReference type="Gene3D" id="2.60.40.10">
    <property type="entry name" value="Immunoglobulins"/>
    <property type="match status" value="10"/>
</dbReference>
<dbReference type="InterPro" id="IPR047102">
    <property type="entry name" value="Contactin-1_2_Ig1"/>
</dbReference>
<dbReference type="InterPro" id="IPR003961">
    <property type="entry name" value="FN3_dom"/>
</dbReference>
<dbReference type="InterPro" id="IPR036116">
    <property type="entry name" value="FN3_sf"/>
</dbReference>
<dbReference type="InterPro" id="IPR007110">
    <property type="entry name" value="Ig-like_dom"/>
</dbReference>
<dbReference type="InterPro" id="IPR036179">
    <property type="entry name" value="Ig-like_dom_sf"/>
</dbReference>
<dbReference type="InterPro" id="IPR013783">
    <property type="entry name" value="Ig-like_fold"/>
</dbReference>
<dbReference type="InterPro" id="IPR013098">
    <property type="entry name" value="Ig_I-set"/>
</dbReference>
<dbReference type="InterPro" id="IPR003599">
    <property type="entry name" value="Ig_sub"/>
</dbReference>
<dbReference type="InterPro" id="IPR003598">
    <property type="entry name" value="Ig_sub2"/>
</dbReference>
<dbReference type="PANTHER" id="PTHR44170:SF28">
    <property type="entry name" value="CONTACTIN-2"/>
    <property type="match status" value="1"/>
</dbReference>
<dbReference type="PANTHER" id="PTHR44170">
    <property type="entry name" value="PROTEIN SIDEKICK"/>
    <property type="match status" value="1"/>
</dbReference>
<dbReference type="Pfam" id="PF00041">
    <property type="entry name" value="fn3"/>
    <property type="match status" value="2"/>
</dbReference>
<dbReference type="Pfam" id="PF07679">
    <property type="entry name" value="I-set"/>
    <property type="match status" value="2"/>
</dbReference>
<dbReference type="Pfam" id="PF13927">
    <property type="entry name" value="Ig_3"/>
    <property type="match status" value="3"/>
</dbReference>
<dbReference type="SMART" id="SM00060">
    <property type="entry name" value="FN3"/>
    <property type="match status" value="4"/>
</dbReference>
<dbReference type="SMART" id="SM00409">
    <property type="entry name" value="IG"/>
    <property type="match status" value="6"/>
</dbReference>
<dbReference type="SMART" id="SM00408">
    <property type="entry name" value="IGc2"/>
    <property type="match status" value="5"/>
</dbReference>
<dbReference type="SUPFAM" id="SSF49265">
    <property type="entry name" value="Fibronectin type III"/>
    <property type="match status" value="3"/>
</dbReference>
<dbReference type="SUPFAM" id="SSF48726">
    <property type="entry name" value="Immunoglobulin"/>
    <property type="match status" value="6"/>
</dbReference>
<dbReference type="PROSITE" id="PS50853">
    <property type="entry name" value="FN3"/>
    <property type="match status" value="4"/>
</dbReference>
<dbReference type="PROSITE" id="PS50835">
    <property type="entry name" value="IG_LIKE"/>
    <property type="match status" value="6"/>
</dbReference>